<accession>A3Q988</accession>
<name>RS3_SHELP</name>
<organism>
    <name type="scientific">Shewanella loihica (strain ATCC BAA-1088 / PV-4)</name>
    <dbReference type="NCBI Taxonomy" id="323850"/>
    <lineage>
        <taxon>Bacteria</taxon>
        <taxon>Pseudomonadati</taxon>
        <taxon>Pseudomonadota</taxon>
        <taxon>Gammaproteobacteria</taxon>
        <taxon>Alteromonadales</taxon>
        <taxon>Shewanellaceae</taxon>
        <taxon>Shewanella</taxon>
    </lineage>
</organism>
<protein>
    <recommendedName>
        <fullName evidence="1">Small ribosomal subunit protein uS3</fullName>
    </recommendedName>
    <alternativeName>
        <fullName evidence="2">30S ribosomal protein S3</fullName>
    </alternativeName>
</protein>
<feature type="chain" id="PRO_0000293881" description="Small ribosomal subunit protein uS3">
    <location>
        <begin position="1"/>
        <end position="229"/>
    </location>
</feature>
<feature type="domain" description="KH type-2" evidence="1">
    <location>
        <begin position="39"/>
        <end position="107"/>
    </location>
</feature>
<keyword id="KW-1185">Reference proteome</keyword>
<keyword id="KW-0687">Ribonucleoprotein</keyword>
<keyword id="KW-0689">Ribosomal protein</keyword>
<keyword id="KW-0694">RNA-binding</keyword>
<keyword id="KW-0699">rRNA-binding</keyword>
<sequence length="229" mass="25650">MGQKVHPNGIRLGITKPWISTWYADKSDYANNLSSDWEVRKFLEKKLKQASVSKIVIERPAKSVRVTIHTARPGVVIGKKGEDVEKLRNEVAKLTGIPAQINIAEIRKPELDAKLVAEGIASQLERRVMFRRAMKRAVQNAMRLGAKGIKVEVSGRLGGAEIARSEWYREGRVPLHTLRADIDYSTAESHTQYGVIGVKVWVFKGEVLDGVVPALEEPKQQPKRKPRGK</sequence>
<dbReference type="EMBL" id="CP000606">
    <property type="protein sequence ID" value="ABO22036.1"/>
    <property type="molecule type" value="Genomic_DNA"/>
</dbReference>
<dbReference type="RefSeq" id="WP_011863972.1">
    <property type="nucleotide sequence ID" value="NC_009092.1"/>
</dbReference>
<dbReference type="SMR" id="A3Q988"/>
<dbReference type="STRING" id="323850.Shew_0164"/>
<dbReference type="KEGG" id="slo:Shew_0164"/>
<dbReference type="eggNOG" id="COG0092">
    <property type="taxonomic scope" value="Bacteria"/>
</dbReference>
<dbReference type="HOGENOM" id="CLU_058591_0_2_6"/>
<dbReference type="OrthoDB" id="9806396at2"/>
<dbReference type="Proteomes" id="UP000001558">
    <property type="component" value="Chromosome"/>
</dbReference>
<dbReference type="GO" id="GO:0022627">
    <property type="term" value="C:cytosolic small ribosomal subunit"/>
    <property type="evidence" value="ECO:0007669"/>
    <property type="project" value="TreeGrafter"/>
</dbReference>
<dbReference type="GO" id="GO:0003729">
    <property type="term" value="F:mRNA binding"/>
    <property type="evidence" value="ECO:0007669"/>
    <property type="project" value="UniProtKB-UniRule"/>
</dbReference>
<dbReference type="GO" id="GO:0019843">
    <property type="term" value="F:rRNA binding"/>
    <property type="evidence" value="ECO:0007669"/>
    <property type="project" value="UniProtKB-UniRule"/>
</dbReference>
<dbReference type="GO" id="GO:0003735">
    <property type="term" value="F:structural constituent of ribosome"/>
    <property type="evidence" value="ECO:0007669"/>
    <property type="project" value="InterPro"/>
</dbReference>
<dbReference type="GO" id="GO:0006412">
    <property type="term" value="P:translation"/>
    <property type="evidence" value="ECO:0007669"/>
    <property type="project" value="UniProtKB-UniRule"/>
</dbReference>
<dbReference type="CDD" id="cd02412">
    <property type="entry name" value="KH-II_30S_S3"/>
    <property type="match status" value="1"/>
</dbReference>
<dbReference type="FunFam" id="3.30.1140.32:FF:000001">
    <property type="entry name" value="30S ribosomal protein S3"/>
    <property type="match status" value="1"/>
</dbReference>
<dbReference type="FunFam" id="3.30.300.20:FF:000001">
    <property type="entry name" value="30S ribosomal protein S3"/>
    <property type="match status" value="1"/>
</dbReference>
<dbReference type="Gene3D" id="3.30.300.20">
    <property type="match status" value="1"/>
</dbReference>
<dbReference type="Gene3D" id="3.30.1140.32">
    <property type="entry name" value="Ribosomal protein S3, C-terminal domain"/>
    <property type="match status" value="1"/>
</dbReference>
<dbReference type="HAMAP" id="MF_01309_B">
    <property type="entry name" value="Ribosomal_uS3_B"/>
    <property type="match status" value="1"/>
</dbReference>
<dbReference type="InterPro" id="IPR004087">
    <property type="entry name" value="KH_dom"/>
</dbReference>
<dbReference type="InterPro" id="IPR015946">
    <property type="entry name" value="KH_dom-like_a/b"/>
</dbReference>
<dbReference type="InterPro" id="IPR004044">
    <property type="entry name" value="KH_dom_type_2"/>
</dbReference>
<dbReference type="InterPro" id="IPR009019">
    <property type="entry name" value="KH_sf_prok-type"/>
</dbReference>
<dbReference type="InterPro" id="IPR036419">
    <property type="entry name" value="Ribosomal_S3_C_sf"/>
</dbReference>
<dbReference type="InterPro" id="IPR005704">
    <property type="entry name" value="Ribosomal_uS3_bac-typ"/>
</dbReference>
<dbReference type="InterPro" id="IPR001351">
    <property type="entry name" value="Ribosomal_uS3_C"/>
</dbReference>
<dbReference type="InterPro" id="IPR018280">
    <property type="entry name" value="Ribosomal_uS3_CS"/>
</dbReference>
<dbReference type="NCBIfam" id="TIGR01009">
    <property type="entry name" value="rpsC_bact"/>
    <property type="match status" value="1"/>
</dbReference>
<dbReference type="PANTHER" id="PTHR11760">
    <property type="entry name" value="30S/40S RIBOSOMAL PROTEIN S3"/>
    <property type="match status" value="1"/>
</dbReference>
<dbReference type="PANTHER" id="PTHR11760:SF19">
    <property type="entry name" value="SMALL RIBOSOMAL SUBUNIT PROTEIN US3C"/>
    <property type="match status" value="1"/>
</dbReference>
<dbReference type="Pfam" id="PF07650">
    <property type="entry name" value="KH_2"/>
    <property type="match status" value="1"/>
</dbReference>
<dbReference type="Pfam" id="PF00189">
    <property type="entry name" value="Ribosomal_S3_C"/>
    <property type="match status" value="1"/>
</dbReference>
<dbReference type="SMART" id="SM00322">
    <property type="entry name" value="KH"/>
    <property type="match status" value="1"/>
</dbReference>
<dbReference type="SUPFAM" id="SSF54814">
    <property type="entry name" value="Prokaryotic type KH domain (KH-domain type II)"/>
    <property type="match status" value="1"/>
</dbReference>
<dbReference type="SUPFAM" id="SSF54821">
    <property type="entry name" value="Ribosomal protein S3 C-terminal domain"/>
    <property type="match status" value="1"/>
</dbReference>
<dbReference type="PROSITE" id="PS50823">
    <property type="entry name" value="KH_TYPE_2"/>
    <property type="match status" value="1"/>
</dbReference>
<dbReference type="PROSITE" id="PS00548">
    <property type="entry name" value="RIBOSOMAL_S3"/>
    <property type="match status" value="1"/>
</dbReference>
<reference key="1">
    <citation type="submission" date="2007-03" db="EMBL/GenBank/DDBJ databases">
        <title>Complete sequence of Shewanella loihica PV-4.</title>
        <authorList>
            <consortium name="US DOE Joint Genome Institute"/>
            <person name="Copeland A."/>
            <person name="Lucas S."/>
            <person name="Lapidus A."/>
            <person name="Barry K."/>
            <person name="Detter J.C."/>
            <person name="Glavina del Rio T."/>
            <person name="Hammon N."/>
            <person name="Israni S."/>
            <person name="Dalin E."/>
            <person name="Tice H."/>
            <person name="Pitluck S."/>
            <person name="Chain P."/>
            <person name="Malfatti S."/>
            <person name="Shin M."/>
            <person name="Vergez L."/>
            <person name="Schmutz J."/>
            <person name="Larimer F."/>
            <person name="Land M."/>
            <person name="Hauser L."/>
            <person name="Kyrpides N."/>
            <person name="Mikhailova N."/>
            <person name="Romine M.F."/>
            <person name="Serres G."/>
            <person name="Fredrickson J."/>
            <person name="Tiedje J."/>
            <person name="Richardson P."/>
        </authorList>
    </citation>
    <scope>NUCLEOTIDE SEQUENCE [LARGE SCALE GENOMIC DNA]</scope>
    <source>
        <strain>ATCC BAA-1088 / PV-4</strain>
    </source>
</reference>
<gene>
    <name evidence="1" type="primary">rpsC</name>
    <name type="ordered locus">Shew_0164</name>
</gene>
<comment type="function">
    <text evidence="1">Binds the lower part of the 30S subunit head. Binds mRNA in the 70S ribosome, positioning it for translation.</text>
</comment>
<comment type="subunit">
    <text evidence="1">Part of the 30S ribosomal subunit. Forms a tight complex with proteins S10 and S14.</text>
</comment>
<comment type="similarity">
    <text evidence="1">Belongs to the universal ribosomal protein uS3 family.</text>
</comment>
<proteinExistence type="inferred from homology"/>
<evidence type="ECO:0000255" key="1">
    <source>
        <dbReference type="HAMAP-Rule" id="MF_01309"/>
    </source>
</evidence>
<evidence type="ECO:0000305" key="2"/>